<sequence length="62" mass="7029">MKSTLMTASLLILVLLSIVDYASVYAELIDSEISMERHWINACFNICMKISSDQKYCKSFCG</sequence>
<organism>
    <name type="scientific">Heterometrus petersii</name>
    <name type="common">Asian forest scorpion</name>
    <dbReference type="NCBI Taxonomy" id="754296"/>
    <lineage>
        <taxon>Eukaryota</taxon>
        <taxon>Metazoa</taxon>
        <taxon>Ecdysozoa</taxon>
        <taxon>Arthropoda</taxon>
        <taxon>Chelicerata</taxon>
        <taxon>Arachnida</taxon>
        <taxon>Scorpiones</taxon>
        <taxon>Iurida</taxon>
        <taxon>Scorpionoidea</taxon>
        <taxon>Scorpionidae</taxon>
        <taxon>Heterometrinae</taxon>
        <taxon>Heterometrus</taxon>
    </lineage>
</organism>
<keyword id="KW-1015">Disulfide bond</keyword>
<keyword id="KW-0872">Ion channel impairing toxin</keyword>
<keyword id="KW-0528">Neurotoxin</keyword>
<keyword id="KW-0632">Potassium channel impairing toxin</keyword>
<keyword id="KW-0964">Secreted</keyword>
<keyword id="KW-0732">Signal</keyword>
<keyword id="KW-0800">Toxin</keyword>
<keyword id="KW-1220">Voltage-gated potassium channel impairing toxin</keyword>
<dbReference type="SMR" id="P0DJ37"/>
<dbReference type="GO" id="GO:0005576">
    <property type="term" value="C:extracellular region"/>
    <property type="evidence" value="ECO:0007669"/>
    <property type="project" value="UniProtKB-SubCell"/>
</dbReference>
<dbReference type="GO" id="GO:0015459">
    <property type="term" value="F:potassium channel regulator activity"/>
    <property type="evidence" value="ECO:0007669"/>
    <property type="project" value="UniProtKB-KW"/>
</dbReference>
<dbReference type="GO" id="GO:0090729">
    <property type="term" value="F:toxin activity"/>
    <property type="evidence" value="ECO:0007669"/>
    <property type="project" value="UniProtKB-KW"/>
</dbReference>
<protein>
    <recommendedName>
        <fullName evidence="5">Potassium channel toxin kappa-KTx 3.2</fullName>
    </recommendedName>
    <alternativeName>
        <fullName evidence="4">HSP040C.3</fullName>
    </alternativeName>
</protein>
<accession>P0DJ37</accession>
<proteinExistence type="evidence at protein level"/>
<comment type="function">
    <text evidence="1">Potassium channel inhibitor (Kv).</text>
</comment>
<comment type="subcellular location">
    <subcellularLocation>
        <location evidence="1">Secreted</location>
    </subcellularLocation>
</comment>
<comment type="tissue specificity">
    <text evidence="6">Expressed by the venom gland.</text>
</comment>
<comment type="domain">
    <text evidence="2">Has the structural arrangement of two alpha-helices stabilized by disulfide bonds (CSalpha/alpha 2(S-S)).</text>
</comment>
<comment type="similarity">
    <text evidence="6">Belongs to the short scorpion toxin superfamily. Potassium channel inhibitor kappa-KTx family. Kappa-KTx 3 subfamily.</text>
</comment>
<name>KKX32_HETPE</name>
<reference key="1">
    <citation type="journal article" date="2010" name="Proteomics">
        <title>Molecular diversity of toxic components from the scorpion Heterometrus petersii venom revealed by proteomic and transcriptome analysis.</title>
        <authorList>
            <person name="Ma Y."/>
            <person name="Zhao Y."/>
            <person name="Zhao R."/>
            <person name="Zhang W."/>
            <person name="He Y."/>
            <person name="Wu Y."/>
            <person name="Cao Z."/>
            <person name="Guo L."/>
            <person name="Li W."/>
        </authorList>
    </citation>
    <scope>NUCLEOTIDE SEQUENCE [MRNA]</scope>
    <scope>IDENTIFICATION BY MASS SPECTROMETRY</scope>
    <source>
        <tissue>Venom</tissue>
        <tissue>Venom gland</tissue>
    </source>
</reference>
<reference key="2">
    <citation type="journal article" date="2012" name="Biochem. Pharmacol.">
        <title>Purification, molecular cloning and functional characterization of HelaTx1 (Heterometrus laoticus): the first member of a new kappa-KTX subfamily.</title>
        <authorList>
            <person name="Vandendriessche T."/>
            <person name="Kopljar I."/>
            <person name="Jenkins D.P."/>
            <person name="Diego-Garcia E."/>
            <person name="Abdel-Mottaleb Y."/>
            <person name="Vermassen E."/>
            <person name="Clynen E."/>
            <person name="Schoofs L."/>
            <person name="Wulff H."/>
            <person name="Snyders D."/>
            <person name="Tytgat J."/>
        </authorList>
    </citation>
    <scope>NOMENCLATURE</scope>
</reference>
<feature type="signal peptide" evidence="3">
    <location>
        <begin position="1"/>
        <end position="26"/>
    </location>
</feature>
<feature type="propeptide" id="PRO_0000416804" evidence="1">
    <location>
        <begin position="27"/>
        <end position="36"/>
    </location>
</feature>
<feature type="peptide" id="PRO_0000416805" description="Potassium channel toxin kappa-KTx 3.2">
    <location>
        <begin position="38"/>
        <end position="62"/>
    </location>
</feature>
<feature type="disulfide bond" evidence="2">
    <location>
        <begin position="43"/>
        <end position="61"/>
    </location>
</feature>
<feature type="disulfide bond" evidence="2">
    <location>
        <begin position="47"/>
        <end position="57"/>
    </location>
</feature>
<evidence type="ECO:0000250" key="1"/>
<evidence type="ECO:0000250" key="2">
    <source>
        <dbReference type="UniProtKB" id="P82850"/>
    </source>
</evidence>
<evidence type="ECO:0000255" key="3"/>
<evidence type="ECO:0000303" key="4">
    <source>
    </source>
</evidence>
<evidence type="ECO:0000303" key="5">
    <source>
    </source>
</evidence>
<evidence type="ECO:0000305" key="6"/>